<protein>
    <recommendedName>
        <fullName evidence="5">Protein IQ-DOMAIN 16</fullName>
        <shortName evidence="5">AtIQD16</shortName>
    </recommendedName>
</protein>
<gene>
    <name evidence="5" type="primary">IQD16</name>
    <name evidence="7" type="ordered locus">At4g10640</name>
    <name evidence="8" type="ORF">F3H7.10</name>
    <name evidence="9" type="ORF">T4F9.100</name>
</gene>
<sequence>MAKKNGTSWFTAVKKILWSPSKDSDKKTHHHKETDIKRKEKKGWIFRKTKLETTNSVLQHTVRTVEAEEKEKPPVIVSSVEEGVTEIVKLTATPGFIRRHWAAIIIQTAFRGYLSRRALRALKGIVKLQALVRGNNVRNQAKLTLRCIKALVRVQDQVLNHHQQQRSRVLLSPPSRNYNIEARRNSMFAESNGFWDTKTYLQDIRSRRSLSRDMNRCNNEFYSEETELILQKKLEIAIKREKAQALALSNQIRSRSSRNQSAGDDRELLERTQWLDRWMATKQWDDTITNSTNVRDPIKTLEAVTTHHHQRSYPATPPSCRASRSVMVRSASPRIPCSPSSMQPNYMSATESAKAKARTQSTPRRRPMTAKKRLCYAEEESLRSPSFKSCLWGDHESDYSCCYGDGFAGKISPCSTTELRWLK</sequence>
<evidence type="ECO:0000250" key="1">
    <source>
        <dbReference type="UniProtKB" id="Q9SF32"/>
    </source>
</evidence>
<evidence type="ECO:0000255" key="2"/>
<evidence type="ECO:0000255" key="3">
    <source>
        <dbReference type="PROSITE-ProRule" id="PRU00116"/>
    </source>
</evidence>
<evidence type="ECO:0000269" key="4">
    <source>
    </source>
</evidence>
<evidence type="ECO:0000303" key="5">
    <source>
    </source>
</evidence>
<evidence type="ECO:0000305" key="6"/>
<evidence type="ECO:0000312" key="7">
    <source>
        <dbReference type="Araport" id="AT4G10640"/>
    </source>
</evidence>
<evidence type="ECO:0000312" key="8">
    <source>
        <dbReference type="EMBL" id="AAD03435.1"/>
    </source>
</evidence>
<evidence type="ECO:0000312" key="9">
    <source>
        <dbReference type="EMBL" id="CAB40030.1"/>
    </source>
</evidence>
<organism>
    <name type="scientific">Arabidopsis thaliana</name>
    <name type="common">Mouse-ear cress</name>
    <dbReference type="NCBI Taxonomy" id="3702"/>
    <lineage>
        <taxon>Eukaryota</taxon>
        <taxon>Viridiplantae</taxon>
        <taxon>Streptophyta</taxon>
        <taxon>Embryophyta</taxon>
        <taxon>Tracheophyta</taxon>
        <taxon>Spermatophyta</taxon>
        <taxon>Magnoliopsida</taxon>
        <taxon>eudicotyledons</taxon>
        <taxon>Gunneridae</taxon>
        <taxon>Pentapetalae</taxon>
        <taxon>rosids</taxon>
        <taxon>malvids</taxon>
        <taxon>Brassicales</taxon>
        <taxon>Brassicaceae</taxon>
        <taxon>Camelineae</taxon>
        <taxon>Arabidopsis</taxon>
    </lineage>
</organism>
<accession>Q7XA83</accession>
<accession>Q9T0C1</accession>
<accession>Q9ZSC0</accession>
<keyword id="KW-0112">Calmodulin-binding</keyword>
<keyword id="KW-1003">Cell membrane</keyword>
<keyword id="KW-0175">Coiled coil</keyword>
<keyword id="KW-0963">Cytoplasm</keyword>
<keyword id="KW-0206">Cytoskeleton</keyword>
<keyword id="KW-0472">Membrane</keyword>
<keyword id="KW-1185">Reference proteome</keyword>
<keyword id="KW-0677">Repeat</keyword>
<comment type="function">
    <text evidence="1 4">May be involved in cooperative interactions with calmodulins or calmodulin-like proteins (By similarity). Recruits calmodulin proteins to microtubules, thus being a potential scaffold in cellular signaling and trafficking (PubMed:28115582). Regulates cell shape and elongation in aerial organs (i.e. cotyledons, leaves, and hypocotyls) probably by regulating cortical microtubules (MT) arrays orientation (PubMed:28115582). May associate with nucleic acids and regulate gene expression at the transcriptional or post-transcriptional level (By similarity).</text>
</comment>
<comment type="subunit">
    <text evidence="1">Binds to multiple calmodulin (CaM) in the presence of Ca(2+) and CaM-like proteins.</text>
</comment>
<comment type="subcellular location">
    <subcellularLocation>
        <location evidence="4">Cytoplasm</location>
        <location evidence="4">Cytoskeleton</location>
    </subcellularLocation>
    <subcellularLocation>
        <location evidence="4">Cell membrane</location>
    </subcellularLocation>
    <text evidence="4">Recruits calmodulin (CaM2) to microtubules.</text>
</comment>
<comment type="disruption phenotype">
    <text evidence="4">No visible phenotype.</text>
</comment>
<comment type="similarity">
    <text evidence="6">Belongs to the IQD family.</text>
</comment>
<comment type="sequence caution" evidence="6">
    <conflict type="erroneous gene model prediction">
        <sequence resource="EMBL-CDS" id="AAD03435"/>
    </conflict>
</comment>
<comment type="sequence caution" evidence="6">
    <conflict type="erroneous gene model prediction">
        <sequence resource="EMBL-CDS" id="CAB40030"/>
    </conflict>
</comment>
<comment type="sequence caution" evidence="6">
    <conflict type="erroneous gene model prediction">
        <sequence resource="EMBL-CDS" id="CAB81165"/>
    </conflict>
</comment>
<dbReference type="EMBL" id="AF118222">
    <property type="protein sequence ID" value="AAD03435.1"/>
    <property type="status" value="ALT_SEQ"/>
    <property type="molecule type" value="Genomic_DNA"/>
</dbReference>
<dbReference type="EMBL" id="AL049523">
    <property type="protein sequence ID" value="CAB40030.1"/>
    <property type="status" value="ALT_SEQ"/>
    <property type="molecule type" value="Genomic_DNA"/>
</dbReference>
<dbReference type="EMBL" id="AL161518">
    <property type="protein sequence ID" value="CAB81165.1"/>
    <property type="status" value="ALT_SEQ"/>
    <property type="molecule type" value="Genomic_DNA"/>
</dbReference>
<dbReference type="EMBL" id="CP002687">
    <property type="protein sequence ID" value="AEE82912.1"/>
    <property type="molecule type" value="Genomic_DNA"/>
</dbReference>
<dbReference type="EMBL" id="BT010145">
    <property type="protein sequence ID" value="AAQ22614.1"/>
    <property type="molecule type" value="mRNA"/>
</dbReference>
<dbReference type="EMBL" id="AK228338">
    <property type="protein sequence ID" value="BAF00278.1"/>
    <property type="molecule type" value="mRNA"/>
</dbReference>
<dbReference type="PIR" id="T04199">
    <property type="entry name" value="T04199"/>
</dbReference>
<dbReference type="RefSeq" id="NP_192802.2">
    <property type="nucleotide sequence ID" value="NM_117132.4"/>
</dbReference>
<dbReference type="SMR" id="Q7XA83"/>
<dbReference type="STRING" id="3702.Q7XA83"/>
<dbReference type="GlyGen" id="Q7XA83">
    <property type="glycosylation" value="1 site"/>
</dbReference>
<dbReference type="iPTMnet" id="Q7XA83"/>
<dbReference type="PaxDb" id="3702-AT4G10640.1"/>
<dbReference type="ProteomicsDB" id="191576"/>
<dbReference type="EnsemblPlants" id="AT4G10640.1">
    <property type="protein sequence ID" value="AT4G10640.1"/>
    <property type="gene ID" value="AT4G10640"/>
</dbReference>
<dbReference type="GeneID" id="826656"/>
<dbReference type="Gramene" id="AT4G10640.1">
    <property type="protein sequence ID" value="AT4G10640.1"/>
    <property type="gene ID" value="AT4G10640"/>
</dbReference>
<dbReference type="KEGG" id="ath:AT4G10640"/>
<dbReference type="Araport" id="AT4G10640"/>
<dbReference type="TAIR" id="AT4G10640">
    <property type="gene designation" value="IQD16"/>
</dbReference>
<dbReference type="eggNOG" id="ENOG502R300">
    <property type="taxonomic scope" value="Eukaryota"/>
</dbReference>
<dbReference type="HOGENOM" id="CLU_048049_0_0_1"/>
<dbReference type="InParanoid" id="Q7XA83"/>
<dbReference type="OMA" id="KSAYNGC"/>
<dbReference type="PhylomeDB" id="Q7XA83"/>
<dbReference type="PRO" id="PR:Q7XA83"/>
<dbReference type="Proteomes" id="UP000006548">
    <property type="component" value="Chromosome 4"/>
</dbReference>
<dbReference type="ExpressionAtlas" id="Q7XA83">
    <property type="expression patterns" value="baseline and differential"/>
</dbReference>
<dbReference type="GO" id="GO:0005737">
    <property type="term" value="C:cytoplasm"/>
    <property type="evidence" value="ECO:0007669"/>
    <property type="project" value="UniProtKB-KW"/>
</dbReference>
<dbReference type="GO" id="GO:0005856">
    <property type="term" value="C:cytoskeleton"/>
    <property type="evidence" value="ECO:0007669"/>
    <property type="project" value="UniProtKB-SubCell"/>
</dbReference>
<dbReference type="GO" id="GO:0005886">
    <property type="term" value="C:plasma membrane"/>
    <property type="evidence" value="ECO:0000314"/>
    <property type="project" value="TAIR"/>
</dbReference>
<dbReference type="GO" id="GO:0005516">
    <property type="term" value="F:calmodulin binding"/>
    <property type="evidence" value="ECO:0000353"/>
    <property type="project" value="TAIR"/>
</dbReference>
<dbReference type="CDD" id="cd23767">
    <property type="entry name" value="IQCD"/>
    <property type="match status" value="1"/>
</dbReference>
<dbReference type="FunFam" id="1.20.5.190:FF:000062">
    <property type="entry name" value="IQ-domain 11"/>
    <property type="match status" value="1"/>
</dbReference>
<dbReference type="Gene3D" id="1.20.5.190">
    <property type="match status" value="1"/>
</dbReference>
<dbReference type="InterPro" id="IPR025064">
    <property type="entry name" value="DUF4005"/>
</dbReference>
<dbReference type="InterPro" id="IPR000048">
    <property type="entry name" value="IQ_motif_EF-hand-BS"/>
</dbReference>
<dbReference type="PANTHER" id="PTHR32295">
    <property type="entry name" value="IQ-DOMAIN 5-RELATED"/>
    <property type="match status" value="1"/>
</dbReference>
<dbReference type="PANTHER" id="PTHR32295:SF292">
    <property type="entry name" value="PROTEIN IQ-DOMAIN 16"/>
    <property type="match status" value="1"/>
</dbReference>
<dbReference type="Pfam" id="PF13178">
    <property type="entry name" value="DUF4005"/>
    <property type="match status" value="1"/>
</dbReference>
<dbReference type="Pfam" id="PF00612">
    <property type="entry name" value="IQ"/>
    <property type="match status" value="2"/>
</dbReference>
<dbReference type="SMART" id="SM00015">
    <property type="entry name" value="IQ"/>
    <property type="match status" value="2"/>
</dbReference>
<dbReference type="PROSITE" id="PS50096">
    <property type="entry name" value="IQ"/>
    <property type="match status" value="2"/>
</dbReference>
<name>IQD16_ARATH</name>
<feature type="chain" id="PRO_0000453122" description="Protein IQ-DOMAIN 16">
    <location>
        <begin position="1"/>
        <end position="423"/>
    </location>
</feature>
<feature type="domain" description="IQ 1" evidence="3">
    <location>
        <begin position="99"/>
        <end position="127"/>
    </location>
</feature>
<feature type="domain" description="IQ 2" evidence="3">
    <location>
        <begin position="128"/>
        <end position="150"/>
    </location>
</feature>
<feature type="region of interest" description="Calmodulin-binding" evidence="5">
    <location>
        <begin position="235"/>
        <end position="252"/>
    </location>
</feature>
<feature type="coiled-coil region" evidence="2">
    <location>
        <begin position="231"/>
        <end position="251"/>
    </location>
</feature>
<reference key="1">
    <citation type="journal article" date="1999" name="Nature">
        <title>Sequence and analysis of chromosome 4 of the plant Arabidopsis thaliana.</title>
        <authorList>
            <person name="Mayer K.F.X."/>
            <person name="Schueller C."/>
            <person name="Wambutt R."/>
            <person name="Murphy G."/>
            <person name="Volckaert G."/>
            <person name="Pohl T."/>
            <person name="Duesterhoeft A."/>
            <person name="Stiekema W."/>
            <person name="Entian K.-D."/>
            <person name="Terryn N."/>
            <person name="Harris B."/>
            <person name="Ansorge W."/>
            <person name="Brandt P."/>
            <person name="Grivell L.A."/>
            <person name="Rieger M."/>
            <person name="Weichselgartner M."/>
            <person name="de Simone V."/>
            <person name="Obermaier B."/>
            <person name="Mache R."/>
            <person name="Mueller M."/>
            <person name="Kreis M."/>
            <person name="Delseny M."/>
            <person name="Puigdomenech P."/>
            <person name="Watson M."/>
            <person name="Schmidtheini T."/>
            <person name="Reichert B."/>
            <person name="Portetelle D."/>
            <person name="Perez-Alonso M."/>
            <person name="Boutry M."/>
            <person name="Bancroft I."/>
            <person name="Vos P."/>
            <person name="Hoheisel J."/>
            <person name="Zimmermann W."/>
            <person name="Wedler H."/>
            <person name="Ridley P."/>
            <person name="Langham S.-A."/>
            <person name="McCullagh B."/>
            <person name="Bilham L."/>
            <person name="Robben J."/>
            <person name="van der Schueren J."/>
            <person name="Grymonprez B."/>
            <person name="Chuang Y.-J."/>
            <person name="Vandenbussche F."/>
            <person name="Braeken M."/>
            <person name="Weltjens I."/>
            <person name="Voet M."/>
            <person name="Bastiaens I."/>
            <person name="Aert R."/>
            <person name="Defoor E."/>
            <person name="Weitzenegger T."/>
            <person name="Bothe G."/>
            <person name="Ramsperger U."/>
            <person name="Hilbert H."/>
            <person name="Braun M."/>
            <person name="Holzer E."/>
            <person name="Brandt A."/>
            <person name="Peters S."/>
            <person name="van Staveren M."/>
            <person name="Dirkse W."/>
            <person name="Mooijman P."/>
            <person name="Klein Lankhorst R."/>
            <person name="Rose M."/>
            <person name="Hauf J."/>
            <person name="Koetter P."/>
            <person name="Berneiser S."/>
            <person name="Hempel S."/>
            <person name="Feldpausch M."/>
            <person name="Lamberth S."/>
            <person name="Van den Daele H."/>
            <person name="De Keyser A."/>
            <person name="Buysshaert C."/>
            <person name="Gielen J."/>
            <person name="Villarroel R."/>
            <person name="De Clercq R."/>
            <person name="van Montagu M."/>
            <person name="Rogers J."/>
            <person name="Cronin A."/>
            <person name="Quail M.A."/>
            <person name="Bray-Allen S."/>
            <person name="Clark L."/>
            <person name="Doggett J."/>
            <person name="Hall S."/>
            <person name="Kay M."/>
            <person name="Lennard N."/>
            <person name="McLay K."/>
            <person name="Mayes R."/>
            <person name="Pettett A."/>
            <person name="Rajandream M.A."/>
            <person name="Lyne M."/>
            <person name="Benes V."/>
            <person name="Rechmann S."/>
            <person name="Borkova D."/>
            <person name="Bloecker H."/>
            <person name="Scharfe M."/>
            <person name="Grimm M."/>
            <person name="Loehnert T.-H."/>
            <person name="Dose S."/>
            <person name="de Haan M."/>
            <person name="Maarse A.C."/>
            <person name="Schaefer M."/>
            <person name="Mueller-Auer S."/>
            <person name="Gabel C."/>
            <person name="Fuchs M."/>
            <person name="Fartmann B."/>
            <person name="Granderath K."/>
            <person name="Dauner D."/>
            <person name="Herzl A."/>
            <person name="Neumann S."/>
            <person name="Argiriou A."/>
            <person name="Vitale D."/>
            <person name="Liguori R."/>
            <person name="Piravandi E."/>
            <person name="Massenet O."/>
            <person name="Quigley F."/>
            <person name="Clabauld G."/>
            <person name="Muendlein A."/>
            <person name="Felber R."/>
            <person name="Schnabl S."/>
            <person name="Hiller R."/>
            <person name="Schmidt W."/>
            <person name="Lecharny A."/>
            <person name="Aubourg S."/>
            <person name="Chefdor F."/>
            <person name="Cooke R."/>
            <person name="Berger C."/>
            <person name="Monfort A."/>
            <person name="Casacuberta E."/>
            <person name="Gibbons T."/>
            <person name="Weber N."/>
            <person name="Vandenbol M."/>
            <person name="Bargues M."/>
            <person name="Terol J."/>
            <person name="Torres A."/>
            <person name="Perez-Perez A."/>
            <person name="Purnelle B."/>
            <person name="Bent E."/>
            <person name="Johnson S."/>
            <person name="Tacon D."/>
            <person name="Jesse T."/>
            <person name="Heijnen L."/>
            <person name="Schwarz S."/>
            <person name="Scholler P."/>
            <person name="Heber S."/>
            <person name="Francs P."/>
            <person name="Bielke C."/>
            <person name="Frishman D."/>
            <person name="Haase D."/>
            <person name="Lemcke K."/>
            <person name="Mewes H.-W."/>
            <person name="Stocker S."/>
            <person name="Zaccaria P."/>
            <person name="Bevan M."/>
            <person name="Wilson R.K."/>
            <person name="de la Bastide M."/>
            <person name="Habermann K."/>
            <person name="Parnell L."/>
            <person name="Dedhia N."/>
            <person name="Gnoj L."/>
            <person name="Schutz K."/>
            <person name="Huang E."/>
            <person name="Spiegel L."/>
            <person name="Sekhon M."/>
            <person name="Murray J."/>
            <person name="Sheet P."/>
            <person name="Cordes M."/>
            <person name="Abu-Threideh J."/>
            <person name="Stoneking T."/>
            <person name="Kalicki J."/>
            <person name="Graves T."/>
            <person name="Harmon G."/>
            <person name="Edwards J."/>
            <person name="Latreille P."/>
            <person name="Courtney L."/>
            <person name="Cloud J."/>
            <person name="Abbott A."/>
            <person name="Scott K."/>
            <person name="Johnson D."/>
            <person name="Minx P."/>
            <person name="Bentley D."/>
            <person name="Fulton B."/>
            <person name="Miller N."/>
            <person name="Greco T."/>
            <person name="Kemp K."/>
            <person name="Kramer J."/>
            <person name="Fulton L."/>
            <person name="Mardis E."/>
            <person name="Dante M."/>
            <person name="Pepin K."/>
            <person name="Hillier L.W."/>
            <person name="Nelson J."/>
            <person name="Spieth J."/>
            <person name="Ryan E."/>
            <person name="Andrews S."/>
            <person name="Geisel C."/>
            <person name="Layman D."/>
            <person name="Du H."/>
            <person name="Ali J."/>
            <person name="Berghoff A."/>
            <person name="Jones K."/>
            <person name="Drone K."/>
            <person name="Cotton M."/>
            <person name="Joshu C."/>
            <person name="Antonoiu B."/>
            <person name="Zidanic M."/>
            <person name="Strong C."/>
            <person name="Sun H."/>
            <person name="Lamar B."/>
            <person name="Yordan C."/>
            <person name="Ma P."/>
            <person name="Zhong J."/>
            <person name="Preston R."/>
            <person name="Vil D."/>
            <person name="Shekher M."/>
            <person name="Matero A."/>
            <person name="Shah R."/>
            <person name="Swaby I.K."/>
            <person name="O'Shaughnessy A."/>
            <person name="Rodriguez M."/>
            <person name="Hoffman J."/>
            <person name="Till S."/>
            <person name="Granat S."/>
            <person name="Shohdy N."/>
            <person name="Hasegawa A."/>
            <person name="Hameed A."/>
            <person name="Lodhi M."/>
            <person name="Johnson A."/>
            <person name="Chen E."/>
            <person name="Marra M.A."/>
            <person name="Martienssen R."/>
            <person name="McCombie W.R."/>
        </authorList>
    </citation>
    <scope>NUCLEOTIDE SEQUENCE [LARGE SCALE GENOMIC DNA]</scope>
    <source>
        <strain>cv. Columbia</strain>
    </source>
</reference>
<reference key="2">
    <citation type="journal article" date="2017" name="Plant J.">
        <title>Araport11: a complete reannotation of the Arabidopsis thaliana reference genome.</title>
        <authorList>
            <person name="Cheng C.Y."/>
            <person name="Krishnakumar V."/>
            <person name="Chan A.P."/>
            <person name="Thibaud-Nissen F."/>
            <person name="Schobel S."/>
            <person name="Town C.D."/>
        </authorList>
    </citation>
    <scope>GENOME REANNOTATION</scope>
    <source>
        <strain>cv. Columbia</strain>
    </source>
</reference>
<reference key="3">
    <citation type="journal article" date="2003" name="Science">
        <title>Empirical analysis of transcriptional activity in the Arabidopsis genome.</title>
        <authorList>
            <person name="Yamada K."/>
            <person name="Lim J."/>
            <person name="Dale J.M."/>
            <person name="Chen H."/>
            <person name="Shinn P."/>
            <person name="Palm C.J."/>
            <person name="Southwick A.M."/>
            <person name="Wu H.C."/>
            <person name="Kim C.J."/>
            <person name="Nguyen M."/>
            <person name="Pham P.K."/>
            <person name="Cheuk R.F."/>
            <person name="Karlin-Newmann G."/>
            <person name="Liu S.X."/>
            <person name="Lam B."/>
            <person name="Sakano H."/>
            <person name="Wu T."/>
            <person name="Yu G."/>
            <person name="Miranda M."/>
            <person name="Quach H.L."/>
            <person name="Tripp M."/>
            <person name="Chang C.H."/>
            <person name="Lee J.M."/>
            <person name="Toriumi M.J."/>
            <person name="Chan M.M."/>
            <person name="Tang C.C."/>
            <person name="Onodera C.S."/>
            <person name="Deng J.M."/>
            <person name="Akiyama K."/>
            <person name="Ansari Y."/>
            <person name="Arakawa T."/>
            <person name="Banh J."/>
            <person name="Banno F."/>
            <person name="Bowser L."/>
            <person name="Brooks S.Y."/>
            <person name="Carninci P."/>
            <person name="Chao Q."/>
            <person name="Choy N."/>
            <person name="Enju A."/>
            <person name="Goldsmith A.D."/>
            <person name="Gurjal M."/>
            <person name="Hansen N.F."/>
            <person name="Hayashizaki Y."/>
            <person name="Johnson-Hopson C."/>
            <person name="Hsuan V.W."/>
            <person name="Iida K."/>
            <person name="Karnes M."/>
            <person name="Khan S."/>
            <person name="Koesema E."/>
            <person name="Ishida J."/>
            <person name="Jiang P.X."/>
            <person name="Jones T."/>
            <person name="Kawai J."/>
            <person name="Kamiya A."/>
            <person name="Meyers C."/>
            <person name="Nakajima M."/>
            <person name="Narusaka M."/>
            <person name="Seki M."/>
            <person name="Sakurai T."/>
            <person name="Satou M."/>
            <person name="Tamse R."/>
            <person name="Vaysberg M."/>
            <person name="Wallender E.K."/>
            <person name="Wong C."/>
            <person name="Yamamura Y."/>
            <person name="Yuan S."/>
            <person name="Shinozaki K."/>
            <person name="Davis R.W."/>
            <person name="Theologis A."/>
            <person name="Ecker J.R."/>
        </authorList>
    </citation>
    <scope>NUCLEOTIDE SEQUENCE [LARGE SCALE MRNA]</scope>
    <source>
        <strain>cv. Columbia</strain>
    </source>
</reference>
<reference key="4">
    <citation type="submission" date="2006-07" db="EMBL/GenBank/DDBJ databases">
        <title>Large-scale analysis of RIKEN Arabidopsis full-length (RAFL) cDNAs.</title>
        <authorList>
            <person name="Totoki Y."/>
            <person name="Seki M."/>
            <person name="Ishida J."/>
            <person name="Nakajima M."/>
            <person name="Enju A."/>
            <person name="Kamiya A."/>
            <person name="Narusaka M."/>
            <person name="Shin-i T."/>
            <person name="Nakagawa M."/>
            <person name="Sakamoto N."/>
            <person name="Oishi K."/>
            <person name="Kohara Y."/>
            <person name="Kobayashi M."/>
            <person name="Toyoda A."/>
            <person name="Sakaki Y."/>
            <person name="Sakurai T."/>
            <person name="Iida K."/>
            <person name="Akiyama K."/>
            <person name="Satou M."/>
            <person name="Toyoda T."/>
            <person name="Konagaya A."/>
            <person name="Carninci P."/>
            <person name="Kawai J."/>
            <person name="Hayashizaki Y."/>
            <person name="Shinozaki K."/>
        </authorList>
    </citation>
    <scope>NUCLEOTIDE SEQUENCE [LARGE SCALE MRNA]</scope>
    <source>
        <strain>cv. Columbia</strain>
    </source>
</reference>
<reference key="5">
    <citation type="journal article" date="2005" name="BMC Evol. Biol.">
        <title>Genome-wide comparative analysis of the IQD gene families in Arabidopsis thaliana and Oryza sativa.</title>
        <authorList>
            <person name="Abel S."/>
            <person name="Savchenko T."/>
            <person name="Levy M."/>
        </authorList>
    </citation>
    <scope>INTERACTION WITH CALMODULIN</scope>
    <scope>GENE FAMILY</scope>
    <scope>NOMENCLATURE</scope>
    <source>
        <strain>cv. Columbia</strain>
    </source>
</reference>
<reference key="6">
    <citation type="journal article" date="2017" name="Plant Physiol.">
        <title>The IQD family of calmodulin-binding proteins links calcium signaling to microtubules, membrane subdomains, and the nucleus.</title>
        <authorList>
            <person name="Buerstenbinder K."/>
            <person name="Moeller B."/>
            <person name="Ploetner R."/>
            <person name="Stamm G."/>
            <person name="Hause G."/>
            <person name="Mitra D."/>
            <person name="Abel S."/>
        </authorList>
    </citation>
    <scope>FUNCTION</scope>
    <scope>DISRUPTION PHENOTYPE</scope>
    <scope>SUBCELLULAR LOCATION</scope>
    <scope>INTERACTION WITH CALMODULIN</scope>
    <source>
        <strain>cv. Columbia</strain>
    </source>
</reference>
<reference key="7">
    <citation type="journal article" date="2017" name="Plant Signal. Behav.">
        <title>Functions of IQD proteins as hubs in cellular calcium and auxin signaling: A toolbox for shape formation and tissue-specification in plants?</title>
        <authorList>
            <person name="Buerstenbinder K."/>
            <person name="Mitra D."/>
            <person name="Quegwer J."/>
        </authorList>
    </citation>
    <scope>REVIEW</scope>
</reference>
<proteinExistence type="evidence at protein level"/>